<sequence>MQVSVRDNNVDQALRALKKKLQREGVFREMKLKQHFEKPSEKKAREKAEAIRRARKLARKKAQREGLL</sequence>
<feature type="chain" id="PRO_0000266768" description="Small ribosomal subunit protein bS21">
    <location>
        <begin position="1"/>
        <end position="68"/>
    </location>
</feature>
<dbReference type="EMBL" id="CP000377">
    <property type="protein sequence ID" value="ABF65251.1"/>
    <property type="molecule type" value="Genomic_DNA"/>
</dbReference>
<dbReference type="RefSeq" id="WP_005614280.1">
    <property type="nucleotide sequence ID" value="NC_008044.1"/>
</dbReference>
<dbReference type="SMR" id="Q1GDL5"/>
<dbReference type="STRING" id="292414.TM1040_2519"/>
<dbReference type="GeneID" id="92505826"/>
<dbReference type="KEGG" id="sit:TM1040_2519"/>
<dbReference type="eggNOG" id="COG0828">
    <property type="taxonomic scope" value="Bacteria"/>
</dbReference>
<dbReference type="HOGENOM" id="CLU_159258_0_1_5"/>
<dbReference type="OrthoDB" id="9811907at2"/>
<dbReference type="Proteomes" id="UP000000636">
    <property type="component" value="Chromosome"/>
</dbReference>
<dbReference type="GO" id="GO:1990904">
    <property type="term" value="C:ribonucleoprotein complex"/>
    <property type="evidence" value="ECO:0007669"/>
    <property type="project" value="UniProtKB-KW"/>
</dbReference>
<dbReference type="GO" id="GO:0005840">
    <property type="term" value="C:ribosome"/>
    <property type="evidence" value="ECO:0007669"/>
    <property type="project" value="UniProtKB-KW"/>
</dbReference>
<dbReference type="GO" id="GO:0003735">
    <property type="term" value="F:structural constituent of ribosome"/>
    <property type="evidence" value="ECO:0007669"/>
    <property type="project" value="InterPro"/>
</dbReference>
<dbReference type="GO" id="GO:0006412">
    <property type="term" value="P:translation"/>
    <property type="evidence" value="ECO:0007669"/>
    <property type="project" value="UniProtKB-UniRule"/>
</dbReference>
<dbReference type="Gene3D" id="1.20.5.1150">
    <property type="entry name" value="Ribosomal protein S8"/>
    <property type="match status" value="1"/>
</dbReference>
<dbReference type="HAMAP" id="MF_00358">
    <property type="entry name" value="Ribosomal_bS21"/>
    <property type="match status" value="1"/>
</dbReference>
<dbReference type="InterPro" id="IPR001911">
    <property type="entry name" value="Ribosomal_bS21"/>
</dbReference>
<dbReference type="InterPro" id="IPR018278">
    <property type="entry name" value="Ribosomal_bS21_CS"/>
</dbReference>
<dbReference type="InterPro" id="IPR038380">
    <property type="entry name" value="Ribosomal_bS21_sf"/>
</dbReference>
<dbReference type="NCBIfam" id="TIGR00030">
    <property type="entry name" value="S21p"/>
    <property type="match status" value="1"/>
</dbReference>
<dbReference type="PANTHER" id="PTHR21109">
    <property type="entry name" value="MITOCHONDRIAL 28S RIBOSOMAL PROTEIN S21"/>
    <property type="match status" value="1"/>
</dbReference>
<dbReference type="PANTHER" id="PTHR21109:SF0">
    <property type="entry name" value="SMALL RIBOSOMAL SUBUNIT PROTEIN BS21M"/>
    <property type="match status" value="1"/>
</dbReference>
<dbReference type="Pfam" id="PF01165">
    <property type="entry name" value="Ribosomal_S21"/>
    <property type="match status" value="1"/>
</dbReference>
<dbReference type="PROSITE" id="PS01181">
    <property type="entry name" value="RIBOSOMAL_S21"/>
    <property type="match status" value="1"/>
</dbReference>
<gene>
    <name evidence="1" type="primary">rpsU</name>
    <name type="ordered locus">TM1040_2519</name>
</gene>
<organism>
    <name type="scientific">Ruegeria sp. (strain TM1040)</name>
    <name type="common">Silicibacter sp.</name>
    <dbReference type="NCBI Taxonomy" id="292414"/>
    <lineage>
        <taxon>Bacteria</taxon>
        <taxon>Pseudomonadati</taxon>
        <taxon>Pseudomonadota</taxon>
        <taxon>Alphaproteobacteria</taxon>
        <taxon>Rhodobacterales</taxon>
        <taxon>Roseobacteraceae</taxon>
        <taxon>Ruegeria</taxon>
    </lineage>
</organism>
<name>RS21_RUEST</name>
<reference key="1">
    <citation type="submission" date="2006-05" db="EMBL/GenBank/DDBJ databases">
        <title>Complete sequence of chromosome of Silicibacter sp. TM1040.</title>
        <authorList>
            <consortium name="US DOE Joint Genome Institute"/>
            <person name="Copeland A."/>
            <person name="Lucas S."/>
            <person name="Lapidus A."/>
            <person name="Barry K."/>
            <person name="Detter J.C."/>
            <person name="Glavina del Rio T."/>
            <person name="Hammon N."/>
            <person name="Israni S."/>
            <person name="Dalin E."/>
            <person name="Tice H."/>
            <person name="Pitluck S."/>
            <person name="Brettin T."/>
            <person name="Bruce D."/>
            <person name="Han C."/>
            <person name="Tapia R."/>
            <person name="Goodwin L."/>
            <person name="Thompson L.S."/>
            <person name="Gilna P."/>
            <person name="Schmutz J."/>
            <person name="Larimer F."/>
            <person name="Land M."/>
            <person name="Hauser L."/>
            <person name="Kyrpides N."/>
            <person name="Kim E."/>
            <person name="Belas R."/>
            <person name="Moran M.A."/>
            <person name="Buchan A."/>
            <person name="Gonzalez J.M."/>
            <person name="Schell M.A."/>
            <person name="Sun F."/>
            <person name="Richardson P."/>
        </authorList>
    </citation>
    <scope>NUCLEOTIDE SEQUENCE [LARGE SCALE GENOMIC DNA]</scope>
    <source>
        <strain>TM1040</strain>
    </source>
</reference>
<proteinExistence type="inferred from homology"/>
<evidence type="ECO:0000255" key="1">
    <source>
        <dbReference type="HAMAP-Rule" id="MF_00358"/>
    </source>
</evidence>
<evidence type="ECO:0000305" key="2"/>
<keyword id="KW-1185">Reference proteome</keyword>
<keyword id="KW-0687">Ribonucleoprotein</keyword>
<keyword id="KW-0689">Ribosomal protein</keyword>
<protein>
    <recommendedName>
        <fullName evidence="1">Small ribosomal subunit protein bS21</fullName>
    </recommendedName>
    <alternativeName>
        <fullName evidence="2">30S ribosomal protein S21</fullName>
    </alternativeName>
</protein>
<accession>Q1GDL5</accession>
<comment type="similarity">
    <text evidence="1">Belongs to the bacterial ribosomal protein bS21 family.</text>
</comment>